<evidence type="ECO:0000250" key="1">
    <source>
        <dbReference type="UniProtKB" id="A0A0K1TQ05"/>
    </source>
</evidence>
<evidence type="ECO:0000250" key="2">
    <source>
        <dbReference type="UniProtKB" id="P61425"/>
    </source>
</evidence>
<evidence type="ECO:0000250" key="3">
    <source>
        <dbReference type="UniProtKB" id="Q9A6Q5"/>
    </source>
</evidence>
<evidence type="ECO:0000269" key="4">
    <source>
    </source>
</evidence>
<evidence type="ECO:0000303" key="5">
    <source>
    </source>
</evidence>
<evidence type="ECO:0000305" key="6"/>
<evidence type="ECO:0000305" key="7">
    <source>
    </source>
</evidence>
<gene>
    <name evidence="5" type="primary">bzaB</name>
    <name type="ordered locus">Moth_1722</name>
</gene>
<accession>Q2RHR5</accession>
<proteinExistence type="inferred from homology"/>
<comment type="function">
    <text evidence="1 4">Together with BzaA, probably catalyzes the conversion of aminoimidazole ribotide (AIR) to 5-hydroxybenzimidazole (5-HBI) in a radical S-adenosyl-L-methionine (SAM)-dependent reaction. Is thus involved in the anaerobic biosynthesis of the benzimidazole lower axial ligand of the cobamide produced by M.thermoacetica (PubMed:26246619). Requires BzaA for catalytic activity, as BzaB alone displays no activity (By similarity).</text>
</comment>
<comment type="catalytic activity">
    <reaction evidence="1">
        <text>5-amino-1-(5-phospho-beta-D-ribosyl)imidazole + AH2 + S-adenosyl-L-methionine = 5-hydroxybenzimidazole + 5'-deoxyadenosine + formate + L-methionine + A + NH4(+) + phosphate + 2 H(+)</text>
        <dbReference type="Rhea" id="RHEA:53504"/>
        <dbReference type="ChEBI" id="CHEBI:13193"/>
        <dbReference type="ChEBI" id="CHEBI:15378"/>
        <dbReference type="ChEBI" id="CHEBI:15740"/>
        <dbReference type="ChEBI" id="CHEBI:17319"/>
        <dbReference type="ChEBI" id="CHEBI:17499"/>
        <dbReference type="ChEBI" id="CHEBI:28938"/>
        <dbReference type="ChEBI" id="CHEBI:43474"/>
        <dbReference type="ChEBI" id="CHEBI:57844"/>
        <dbReference type="ChEBI" id="CHEBI:59789"/>
        <dbReference type="ChEBI" id="CHEBI:137404"/>
        <dbReference type="ChEBI" id="CHEBI:137981"/>
        <dbReference type="EC" id="4.1.99.23"/>
    </reaction>
</comment>
<comment type="cofactor">
    <cofactor evidence="2">
        <name>[4Fe-4S] cluster</name>
        <dbReference type="ChEBI" id="CHEBI:49883"/>
    </cofactor>
    <text evidence="3">Binds 1 [4Fe-4S] cluster per subunit. The cluster is coordinated with 3 cysteines and an exchangeable S-adenosyl-L-methionine.</text>
</comment>
<comment type="similarity">
    <text evidence="6">Belongs to the ThiC family. 5-hydroxybenzimidazole synthase subfamily.</text>
</comment>
<keyword id="KW-0004">4Fe-4S</keyword>
<keyword id="KW-0169">Cobalamin biosynthesis</keyword>
<keyword id="KW-0408">Iron</keyword>
<keyword id="KW-0411">Iron-sulfur</keyword>
<keyword id="KW-0456">Lyase</keyword>
<keyword id="KW-0479">Metal-binding</keyword>
<keyword id="KW-0949">S-adenosyl-L-methionine</keyword>
<keyword id="KW-0862">Zinc</keyword>
<name>BZAB_MOOTA</name>
<feature type="chain" id="PRO_0000242273" description="5-hydroxybenzimidazole synthase BzaB">
    <location>
        <begin position="1"/>
        <end position="426"/>
    </location>
</feature>
<feature type="binding site" evidence="3">
    <location>
        <position position="95"/>
    </location>
    <ligand>
        <name>substrate</name>
    </ligand>
</feature>
<feature type="binding site" evidence="3">
    <location>
        <position position="124"/>
    </location>
    <ligand>
        <name>substrate</name>
    </ligand>
</feature>
<feature type="binding site" evidence="3">
    <location>
        <position position="163"/>
    </location>
    <ligand>
        <name>substrate</name>
    </ligand>
</feature>
<feature type="binding site" evidence="3">
    <location>
        <begin position="185"/>
        <end position="187"/>
    </location>
    <ligand>
        <name>substrate</name>
    </ligand>
</feature>
<feature type="binding site" evidence="3">
    <location>
        <begin position="226"/>
        <end position="229"/>
    </location>
    <ligand>
        <name>substrate</name>
    </ligand>
</feature>
<feature type="binding site" evidence="3">
    <location>
        <position position="265"/>
    </location>
    <ligand>
        <name>substrate</name>
    </ligand>
</feature>
<feature type="binding site" evidence="3">
    <location>
        <position position="269"/>
    </location>
    <ligand>
        <name>Zn(2+)</name>
        <dbReference type="ChEBI" id="CHEBI:29105"/>
    </ligand>
</feature>
<feature type="binding site" evidence="3">
    <location>
        <position position="292"/>
    </location>
    <ligand>
        <name>substrate</name>
    </ligand>
</feature>
<feature type="binding site" evidence="3">
    <location>
        <position position="333"/>
    </location>
    <ligand>
        <name>Zn(2+)</name>
        <dbReference type="ChEBI" id="CHEBI:29105"/>
    </ligand>
</feature>
<feature type="binding site" evidence="3">
    <location>
        <position position="407"/>
    </location>
    <ligand>
        <name>[4Fe-4S] cluster</name>
        <dbReference type="ChEBI" id="CHEBI:49883"/>
        <note>4Fe-4S-S-AdoMet</note>
    </ligand>
</feature>
<feature type="binding site" evidence="3">
    <location>
        <position position="410"/>
    </location>
    <ligand>
        <name>[4Fe-4S] cluster</name>
        <dbReference type="ChEBI" id="CHEBI:49883"/>
        <note>4Fe-4S-S-AdoMet</note>
    </ligand>
</feature>
<feature type="binding site" evidence="3">
    <location>
        <position position="414"/>
    </location>
    <ligand>
        <name>[4Fe-4S] cluster</name>
        <dbReference type="ChEBI" id="CHEBI:49883"/>
        <note>4Fe-4S-S-AdoMet</note>
    </ligand>
</feature>
<protein>
    <recommendedName>
        <fullName evidence="7">5-hydroxybenzimidazole synthase BzaB</fullName>
        <shortName evidence="7">5-OHBza synthase</shortName>
        <shortName>HBI synthase</shortName>
        <ecNumber evidence="1">4.1.99.23</ecNumber>
    </recommendedName>
</protein>
<reference key="1">
    <citation type="journal article" date="2015" name="Proc. Natl. Acad. Sci. U.S.A.">
        <title>Anaerobic biosynthesis of the lower ligand of vitamin B12.</title>
        <authorList>
            <person name="Hazra A.B."/>
            <person name="Han A.W."/>
            <person name="Mehta A.P."/>
            <person name="Mok K.C."/>
            <person name="Osadchiy V."/>
            <person name="Begley T.P."/>
            <person name="Taga M.E."/>
        </authorList>
    </citation>
    <scope>NUCLEOTIDE SEQUENCE [GENOMIC DNA]</scope>
    <scope>FUNCTION</scope>
    <source>
        <strain>ATCC 39073 / JCM 9320</strain>
    </source>
</reference>
<reference key="2">
    <citation type="journal article" date="2008" name="Environ. Microbiol.">
        <title>The complete genome sequence of Moorella thermoacetica (f. Clostridium thermoaceticum).</title>
        <authorList>
            <person name="Pierce E."/>
            <person name="Xie G."/>
            <person name="Barabote R.D."/>
            <person name="Saunders E."/>
            <person name="Han C.S."/>
            <person name="Detter J.C."/>
            <person name="Richardson P."/>
            <person name="Brettin T.S."/>
            <person name="Das A."/>
            <person name="Ljungdahl L.G."/>
            <person name="Ragsdale S.W."/>
        </authorList>
    </citation>
    <scope>NUCLEOTIDE SEQUENCE [LARGE SCALE GENOMIC DNA]</scope>
    <source>
        <strain>ATCC 39073 / JCM 9320</strain>
    </source>
</reference>
<sequence length="426" mass="45580">MSQVLDARAGKITPEMEKVAADEKVDVEFVRAGVAEGTIVIPRNTNRKVLKPCGIGRGLRIKVNALIGTSSDRDDRQMEMRKIAAAEAAGCDSFMDLSTGGDIDEMRRLTLAHARVPVGSVPIYQAAIEAIEKRGSIVAMTPDDMFAAVEKQARDGIDFMAIHSALNFEILERLQASGRVTDIVSRGGAFLTGWMLHNQKENPLYEQFDRLLEILLKYDVTLSLGDAIRPGSTADSLDGAQLQGMIVAGELVRRAREAGVQVMVEGPGHVPLNHVETTMKLQKSLCGGAPYFILGTLATDVAPGYDHITAAIGGALAGTVGADFICYVTPAEHLGLPTEQDVKEGVIAARIAAHAADLARGNRQAWERDLQMARARVALDVEKQISLAIDQEKARSLLDGTGEDGVCAACGTNCAALVAARYFGMN</sequence>
<organism>
    <name type="scientific">Moorella thermoacetica (strain ATCC 39073 / JCM 9320)</name>
    <dbReference type="NCBI Taxonomy" id="264732"/>
    <lineage>
        <taxon>Bacteria</taxon>
        <taxon>Bacillati</taxon>
        <taxon>Bacillota</taxon>
        <taxon>Clostridia</taxon>
        <taxon>Moorellales</taxon>
        <taxon>Moorellaceae</taxon>
        <taxon>Moorella</taxon>
    </lineage>
</organism>
<dbReference type="EC" id="4.1.99.23" evidence="1"/>
<dbReference type="EMBL" id="KT347436">
    <property type="protein sequence ID" value="AKV89417.1"/>
    <property type="molecule type" value="Genomic_DNA"/>
</dbReference>
<dbReference type="EMBL" id="CP000232">
    <property type="protein sequence ID" value="ABC20024.1"/>
    <property type="molecule type" value="Genomic_DNA"/>
</dbReference>
<dbReference type="RefSeq" id="YP_430567.1">
    <property type="nucleotide sequence ID" value="NC_007644.1"/>
</dbReference>
<dbReference type="SMR" id="Q2RHR5"/>
<dbReference type="STRING" id="264732.Moth_1722"/>
<dbReference type="EnsemblBacteria" id="ABC20024">
    <property type="protein sequence ID" value="ABC20024"/>
    <property type="gene ID" value="Moth_1722"/>
</dbReference>
<dbReference type="GeneID" id="45617755"/>
<dbReference type="KEGG" id="mta:Moth_1722"/>
<dbReference type="PATRIC" id="fig|264732.11.peg.1865"/>
<dbReference type="eggNOG" id="COG0422">
    <property type="taxonomic scope" value="Bacteria"/>
</dbReference>
<dbReference type="HOGENOM" id="CLU_013181_2_2_9"/>
<dbReference type="OrthoDB" id="9805897at2"/>
<dbReference type="BioCyc" id="MetaCyc:MONOMER-20983"/>
<dbReference type="GO" id="GO:0051539">
    <property type="term" value="F:4 iron, 4 sulfur cluster binding"/>
    <property type="evidence" value="ECO:0007669"/>
    <property type="project" value="UniProtKB-KW"/>
</dbReference>
<dbReference type="GO" id="GO:0016829">
    <property type="term" value="F:lyase activity"/>
    <property type="evidence" value="ECO:0007669"/>
    <property type="project" value="UniProtKB-KW"/>
</dbReference>
<dbReference type="GO" id="GO:0046872">
    <property type="term" value="F:metal ion binding"/>
    <property type="evidence" value="ECO:0007669"/>
    <property type="project" value="UniProtKB-KW"/>
</dbReference>
<dbReference type="GO" id="GO:0009236">
    <property type="term" value="P:cobalamin biosynthetic process"/>
    <property type="evidence" value="ECO:0007669"/>
    <property type="project" value="UniProtKB-KW"/>
</dbReference>
<dbReference type="GO" id="GO:0009228">
    <property type="term" value="P:thiamine biosynthetic process"/>
    <property type="evidence" value="ECO:0007669"/>
    <property type="project" value="InterPro"/>
</dbReference>
<dbReference type="Gene3D" id="3.20.20.540">
    <property type="entry name" value="Radical SAM ThiC family, central domain"/>
    <property type="match status" value="1"/>
</dbReference>
<dbReference type="InterPro" id="IPR038521">
    <property type="entry name" value="ThiC/Bza_core_dom"/>
</dbReference>
<dbReference type="InterPro" id="IPR002817">
    <property type="entry name" value="ThiC/BzaA/B"/>
</dbReference>
<dbReference type="NCBIfam" id="NF009895">
    <property type="entry name" value="PRK13352.1"/>
    <property type="match status" value="1"/>
</dbReference>
<dbReference type="NCBIfam" id="TIGR00190">
    <property type="entry name" value="thiC"/>
    <property type="match status" value="1"/>
</dbReference>
<dbReference type="NCBIfam" id="TIGR04386">
    <property type="entry name" value="ThiC_like_1"/>
    <property type="match status" value="1"/>
</dbReference>
<dbReference type="PANTHER" id="PTHR30557:SF1">
    <property type="entry name" value="PHOSPHOMETHYLPYRIMIDINE SYNTHASE, CHLOROPLASTIC"/>
    <property type="match status" value="1"/>
</dbReference>
<dbReference type="PANTHER" id="PTHR30557">
    <property type="entry name" value="THIAMINE BIOSYNTHESIS PROTEIN THIC"/>
    <property type="match status" value="1"/>
</dbReference>
<dbReference type="Pfam" id="PF01964">
    <property type="entry name" value="ThiC_Rad_SAM"/>
    <property type="match status" value="1"/>
</dbReference>
<dbReference type="SFLD" id="SFLDF00407">
    <property type="entry name" value="phosphomethylpyrimidine_syntha"/>
    <property type="match status" value="1"/>
</dbReference>
<dbReference type="SFLD" id="SFLDG01114">
    <property type="entry name" value="phosphomethylpyrimidine_syntha"/>
    <property type="match status" value="1"/>
</dbReference>
<dbReference type="SFLD" id="SFLDS00113">
    <property type="entry name" value="Radical_SAM_Phosphomethylpyrim"/>
    <property type="match status" value="1"/>
</dbReference>